<protein>
    <recommendedName>
        <fullName>Protein phosphatase methylesterase 1</fullName>
        <shortName>PME-1</shortName>
        <ecNumber>3.1.1.89</ecNumber>
    </recommendedName>
</protein>
<gene>
    <name type="primary">ppe1</name>
    <name type="ORF">AO090005000808/AO090005000809</name>
</gene>
<keyword id="KW-0378">Hydrolase</keyword>
<keyword id="KW-1185">Reference proteome</keyword>
<keyword id="KW-0719">Serine esterase</keyword>
<evidence type="ECO:0000250" key="1"/>
<evidence type="ECO:0000256" key="2">
    <source>
        <dbReference type="SAM" id="MobiDB-lite"/>
    </source>
</evidence>
<evidence type="ECO:0000305" key="3"/>
<reference key="1">
    <citation type="journal article" date="2005" name="Nature">
        <title>Genome sequencing and analysis of Aspergillus oryzae.</title>
        <authorList>
            <person name="Machida M."/>
            <person name="Asai K."/>
            <person name="Sano M."/>
            <person name="Tanaka T."/>
            <person name="Kumagai T."/>
            <person name="Terai G."/>
            <person name="Kusumoto K."/>
            <person name="Arima T."/>
            <person name="Akita O."/>
            <person name="Kashiwagi Y."/>
            <person name="Abe K."/>
            <person name="Gomi K."/>
            <person name="Horiuchi H."/>
            <person name="Kitamoto K."/>
            <person name="Kobayashi T."/>
            <person name="Takeuchi M."/>
            <person name="Denning D.W."/>
            <person name="Galagan J.E."/>
            <person name="Nierman W.C."/>
            <person name="Yu J."/>
            <person name="Archer D.B."/>
            <person name="Bennett J.W."/>
            <person name="Bhatnagar D."/>
            <person name="Cleveland T.E."/>
            <person name="Fedorova N.D."/>
            <person name="Gotoh O."/>
            <person name="Horikawa H."/>
            <person name="Hosoyama A."/>
            <person name="Ichinomiya M."/>
            <person name="Igarashi R."/>
            <person name="Iwashita K."/>
            <person name="Juvvadi P.R."/>
            <person name="Kato M."/>
            <person name="Kato Y."/>
            <person name="Kin T."/>
            <person name="Kokubun A."/>
            <person name="Maeda H."/>
            <person name="Maeyama N."/>
            <person name="Maruyama J."/>
            <person name="Nagasaki H."/>
            <person name="Nakajima T."/>
            <person name="Oda K."/>
            <person name="Okada K."/>
            <person name="Paulsen I."/>
            <person name="Sakamoto K."/>
            <person name="Sawano T."/>
            <person name="Takahashi M."/>
            <person name="Takase K."/>
            <person name="Terabayashi Y."/>
            <person name="Wortman J.R."/>
            <person name="Yamada O."/>
            <person name="Yamagata Y."/>
            <person name="Anazawa H."/>
            <person name="Hata Y."/>
            <person name="Koide Y."/>
            <person name="Komori T."/>
            <person name="Koyama Y."/>
            <person name="Minetoki T."/>
            <person name="Suharnan S."/>
            <person name="Tanaka A."/>
            <person name="Isono K."/>
            <person name="Kuhara S."/>
            <person name="Ogasawara N."/>
            <person name="Kikuchi H."/>
        </authorList>
    </citation>
    <scope>NUCLEOTIDE SEQUENCE [LARGE SCALE GENOMIC DNA]</scope>
    <source>
        <strain>ATCC 42149 / RIB 40</strain>
    </source>
</reference>
<accession>Q2URJ0</accession>
<accession>Q2URJ1</accession>
<feature type="chain" id="PRO_0000223660" description="Protein phosphatase methylesterase 1">
    <location>
        <begin position="1"/>
        <end position="427"/>
    </location>
</feature>
<feature type="region of interest" description="Disordered" evidence="2">
    <location>
        <begin position="1"/>
        <end position="49"/>
    </location>
</feature>
<feature type="region of interest" description="Disordered" evidence="2">
    <location>
        <begin position="402"/>
        <end position="427"/>
    </location>
</feature>
<feature type="compositionally biased region" description="Polar residues" evidence="2">
    <location>
        <begin position="36"/>
        <end position="49"/>
    </location>
</feature>
<feature type="active site" evidence="1">
    <location>
        <position position="207"/>
    </location>
</feature>
<feature type="active site" evidence="1">
    <location>
        <position position="233"/>
    </location>
</feature>
<feature type="active site" evidence="1">
    <location>
        <position position="364"/>
    </location>
</feature>
<name>PPME1_ASPOR</name>
<organism>
    <name type="scientific">Aspergillus oryzae (strain ATCC 42149 / RIB 40)</name>
    <name type="common">Yellow koji mold</name>
    <dbReference type="NCBI Taxonomy" id="510516"/>
    <lineage>
        <taxon>Eukaryota</taxon>
        <taxon>Fungi</taxon>
        <taxon>Dikarya</taxon>
        <taxon>Ascomycota</taxon>
        <taxon>Pezizomycotina</taxon>
        <taxon>Eurotiomycetes</taxon>
        <taxon>Eurotiomycetidae</taxon>
        <taxon>Eurotiales</taxon>
        <taxon>Aspergillaceae</taxon>
        <taxon>Aspergillus</taxon>
        <taxon>Aspergillus subgen. Circumdati</taxon>
    </lineage>
</organism>
<sequence length="427" mass="46896">MSELQKSFAKAKLAKLPPEAPPFSMHPPRDEDDSESASSTGTVVPSPSRQLFARSRGSTCGVIFRLLAILTHPRSNSVETLNWTDFFTQELFLIQETDSARITHHVYLTPPTNSGPLFVMHHGAGSSGLSFATCAEEIRKILPKAGILSIDARDHGQTSTYTETGEGKVELDLSLETLNRDLVFIVRETQSKMGWESLPDIVLVGHSLGGAVITDVAKKGELGPKVLAYAVLDVVEGSAMDALQSMEKYLSTRPTRFPSLASGIEWHTRSRTIRNRTSARVSVPSLLYEEAAPTDPSKPWVWRTNLAETKPFWENWFIGLSKKFLEARGGKLLLLAGTDRLDKELMIGQMQGKYQLQVFPEAGHFVQEDQPVKTAQVLVDFYKRNDRSALVLPPKVADMQASAAMKQGAEAGAVPPFGRGQGSSHKP</sequence>
<comment type="function">
    <text evidence="1">Demethylates proteins that have been reversibly carboxymethylated. Demethylates the phosphatase PP2A catalytic subunit (By similarity).</text>
</comment>
<comment type="catalytic activity">
    <reaction>
        <text>[phosphatase 2A protein]-C-terminal L-leucine methyl ester + H2O = [phosphatase 2A protein]-C-terminal L-leucine + methanol + H(+)</text>
        <dbReference type="Rhea" id="RHEA:48548"/>
        <dbReference type="Rhea" id="RHEA-COMP:12134"/>
        <dbReference type="Rhea" id="RHEA-COMP:12135"/>
        <dbReference type="ChEBI" id="CHEBI:15377"/>
        <dbReference type="ChEBI" id="CHEBI:15378"/>
        <dbReference type="ChEBI" id="CHEBI:17790"/>
        <dbReference type="ChEBI" id="CHEBI:90516"/>
        <dbReference type="ChEBI" id="CHEBI:90517"/>
        <dbReference type="EC" id="3.1.1.89"/>
    </reaction>
</comment>
<comment type="similarity">
    <text evidence="3">Belongs to the AB hydrolase superfamily.</text>
</comment>
<comment type="sequence caution" evidence="3">
    <conflict type="erroneous gene model prediction">
        <sequence resource="EMBL-CDS" id="BAE55824"/>
    </conflict>
</comment>
<comment type="sequence caution" evidence="3">
    <conflict type="erroneous gene model prediction">
        <sequence resource="EMBL-CDS" id="BAE55825"/>
    </conflict>
</comment>
<proteinExistence type="inferred from homology"/>
<dbReference type="EC" id="3.1.1.89"/>
<dbReference type="EMBL" id="BA000049">
    <property type="protein sequence ID" value="BAE55824.1"/>
    <property type="status" value="ALT_SEQ"/>
    <property type="molecule type" value="Genomic_DNA"/>
</dbReference>
<dbReference type="EMBL" id="BA000049">
    <property type="protein sequence ID" value="BAE55825.1"/>
    <property type="status" value="ALT_SEQ"/>
    <property type="molecule type" value="Genomic_DNA"/>
</dbReference>
<dbReference type="SMR" id="Q2URJ0"/>
<dbReference type="STRING" id="510516.Q2URJ0"/>
<dbReference type="ESTHER" id="aspor-ppme1">
    <property type="family name" value="PPase_methylesterase_euk"/>
</dbReference>
<dbReference type="EnsemblFungi" id="BAE55825">
    <property type="protein sequence ID" value="BAE55825"/>
    <property type="gene ID" value="AO090005000809"/>
</dbReference>
<dbReference type="Proteomes" id="UP000006564">
    <property type="component" value="Chromosome 1"/>
</dbReference>
<dbReference type="GO" id="GO:0051722">
    <property type="term" value="F:protein C-terminal methylesterase activity"/>
    <property type="evidence" value="ECO:0007669"/>
    <property type="project" value="UniProtKB-EC"/>
</dbReference>
<dbReference type="FunFam" id="3.40.50.1820:FF:000186">
    <property type="entry name" value="Protein phosphatase methylesterase 1"/>
    <property type="match status" value="1"/>
</dbReference>
<dbReference type="Gene3D" id="3.40.50.1820">
    <property type="entry name" value="alpha/beta hydrolase"/>
    <property type="match status" value="1"/>
</dbReference>
<dbReference type="InterPro" id="IPR000073">
    <property type="entry name" value="AB_hydrolase_1"/>
</dbReference>
<dbReference type="InterPro" id="IPR029058">
    <property type="entry name" value="AB_hydrolase_fold"/>
</dbReference>
<dbReference type="InterPro" id="IPR016812">
    <property type="entry name" value="PPase_methylesterase_euk"/>
</dbReference>
<dbReference type="PANTHER" id="PTHR14189:SF0">
    <property type="entry name" value="PROTEIN PHOSPHATASE METHYLESTERASE 1"/>
    <property type="match status" value="1"/>
</dbReference>
<dbReference type="PANTHER" id="PTHR14189">
    <property type="entry name" value="PROTEIN PHOSPHATASE METHYLESTERASE-1 RELATED"/>
    <property type="match status" value="1"/>
</dbReference>
<dbReference type="Pfam" id="PF12697">
    <property type="entry name" value="Abhydrolase_6"/>
    <property type="match status" value="1"/>
</dbReference>
<dbReference type="SUPFAM" id="SSF53474">
    <property type="entry name" value="alpha/beta-Hydrolases"/>
    <property type="match status" value="1"/>
</dbReference>